<sequence>MVAAPISTVKLTDANLHTRFHSSSSSTPSTLSLPLSLHFHFSSHSKRFSSIRCQSVNGEKRKQSSRNVFDNASNLLTSLLSGANLGSMPIAEGAVTDLFDRPLFFSLYDWFLEHGSVYKLAFGPKAFVVVSDPIVARHILRENAFSYDKGVLADILEPIMGKGLIPADLETWKQRRRVIAPGFHTSYLEAMVQLFTSCSERTVLKVNELLEGEGRDGQKSVELDLEAEFSNLALEIIGLGVFNYDFGSVTNESPVIKAVYGTLFEAEHRSTFYIPYWKFPLARWIVPRQRKFQDDLKVINTCLDGLIRNAKESRQETDVEKLQQRDYSNLKDASLLRFLVDMRGVDVDDRQLRDDLMTMLIAGHETTAAVLTWAVFLLAQNPDKMKKAQAEVDLVLGMGKPTFELLKKLEYIRLIVVETLRLYPQPPLLIRRSLKPDVLPGGHKGDKDGYTIPAGTDVFISVYNLHRSPYFWDRPNDFEPERFLVQNNNEEVEGWAGFDPSRSPGALYPNEIISDFAFLPFGGGPRKCVGDQFALMESTVALVCCYRISMWN</sequence>
<proteinExistence type="evidence at transcript level"/>
<evidence type="ECO:0000250" key="1"/>
<evidence type="ECO:0000255" key="2"/>
<evidence type="ECO:0000305" key="3"/>
<accession>Q43078</accession>
<gene>
    <name type="primary">CYP97B1</name>
    <name type="synonym">CYP97A2</name>
</gene>
<organism>
    <name type="scientific">Pisum sativum</name>
    <name type="common">Garden pea</name>
    <name type="synonym">Lathyrus oleraceus</name>
    <dbReference type="NCBI Taxonomy" id="3888"/>
    <lineage>
        <taxon>Eukaryota</taxon>
        <taxon>Viridiplantae</taxon>
        <taxon>Streptophyta</taxon>
        <taxon>Embryophyta</taxon>
        <taxon>Tracheophyta</taxon>
        <taxon>Spermatophyta</taxon>
        <taxon>Magnoliopsida</taxon>
        <taxon>eudicotyledons</taxon>
        <taxon>Gunneridae</taxon>
        <taxon>Pentapetalae</taxon>
        <taxon>rosids</taxon>
        <taxon>fabids</taxon>
        <taxon>Fabales</taxon>
        <taxon>Fabaceae</taxon>
        <taxon>Papilionoideae</taxon>
        <taxon>50 kb inversion clade</taxon>
        <taxon>NPAAA clade</taxon>
        <taxon>Hologalegina</taxon>
        <taxon>IRL clade</taxon>
        <taxon>Fabeae</taxon>
        <taxon>Pisum</taxon>
    </lineage>
</organism>
<protein>
    <recommendedName>
        <fullName>Cytochrome P450 97B1, chloroplastic</fullName>
        <ecNumber>1.14.-.-</ecNumber>
    </recommendedName>
    <alternativeName>
        <fullName>Cytochrome P450 97A2</fullName>
    </alternativeName>
</protein>
<feature type="transit peptide" description="Chloroplast" evidence="2">
    <location>
        <begin position="1"/>
        <end position="52"/>
    </location>
</feature>
<feature type="chain" id="PRO_0000052194" description="Cytochrome P450 97B1, chloroplastic">
    <location>
        <begin position="53"/>
        <end position="552"/>
    </location>
</feature>
<feature type="binding site" description="axial binding residue" evidence="1">
    <location>
        <position position="528"/>
    </location>
    <ligand>
        <name>heme</name>
        <dbReference type="ChEBI" id="CHEBI:30413"/>
    </ligand>
    <ligandPart>
        <name>Fe</name>
        <dbReference type="ChEBI" id="CHEBI:18248"/>
    </ligandPart>
</feature>
<keyword id="KW-0150">Chloroplast</keyword>
<keyword id="KW-0349">Heme</keyword>
<keyword id="KW-0408">Iron</keyword>
<keyword id="KW-0472">Membrane</keyword>
<keyword id="KW-0479">Metal-binding</keyword>
<keyword id="KW-0503">Monooxygenase</keyword>
<keyword id="KW-0560">Oxidoreductase</keyword>
<keyword id="KW-0934">Plastid</keyword>
<keyword id="KW-0809">Transit peptide</keyword>
<reference key="1">
    <citation type="online journal article" date="1997" name="Plant Gene Register">
        <title>Cloning and sequencing of a cytochrome P450 from Pisum sativum L.</title>
        <authorList>
            <person name="Baltrusch M."/>
            <person name="Fulda M."/>
            <person name="Wolter F.-P."/>
            <person name="Heinz E."/>
        </authorList>
        <locator>PGR97-106</locator>
    </citation>
    <scope>NUCLEOTIDE SEQUENCE [MRNA]</scope>
    <source>
        <strain>cv. Kleine Rheinlaenderin</strain>
        <tissue>Seedling</tissue>
    </source>
</reference>
<name>C97B1_PEA</name>
<comment type="cofactor">
    <cofactor evidence="1">
        <name>heme</name>
        <dbReference type="ChEBI" id="CHEBI:30413"/>
    </cofactor>
</comment>
<comment type="subcellular location">
    <subcellularLocation>
        <location evidence="3">Plastid</location>
        <location evidence="3">Chloroplast membrane</location>
    </subcellularLocation>
</comment>
<comment type="similarity">
    <text evidence="3">Belongs to the cytochrome P450 family.</text>
</comment>
<dbReference type="EC" id="1.14.-.-"/>
<dbReference type="EMBL" id="Z49263">
    <property type="protein sequence ID" value="CAA89260.1"/>
    <property type="molecule type" value="mRNA"/>
</dbReference>
<dbReference type="PIR" id="S71163">
    <property type="entry name" value="S71163"/>
</dbReference>
<dbReference type="SMR" id="Q43078"/>
<dbReference type="GO" id="GO:0031969">
    <property type="term" value="C:chloroplast membrane"/>
    <property type="evidence" value="ECO:0007669"/>
    <property type="project" value="UniProtKB-SubCell"/>
</dbReference>
<dbReference type="GO" id="GO:0020037">
    <property type="term" value="F:heme binding"/>
    <property type="evidence" value="ECO:0007669"/>
    <property type="project" value="InterPro"/>
</dbReference>
<dbReference type="GO" id="GO:0005506">
    <property type="term" value="F:iron ion binding"/>
    <property type="evidence" value="ECO:0007669"/>
    <property type="project" value="InterPro"/>
</dbReference>
<dbReference type="GO" id="GO:0004497">
    <property type="term" value="F:monooxygenase activity"/>
    <property type="evidence" value="ECO:0007669"/>
    <property type="project" value="UniProtKB-KW"/>
</dbReference>
<dbReference type="GO" id="GO:0016705">
    <property type="term" value="F:oxidoreductase activity, acting on paired donors, with incorporation or reduction of molecular oxygen"/>
    <property type="evidence" value="ECO:0007669"/>
    <property type="project" value="InterPro"/>
</dbReference>
<dbReference type="CDD" id="cd11046">
    <property type="entry name" value="CYP97"/>
    <property type="match status" value="1"/>
</dbReference>
<dbReference type="Gene3D" id="1.10.630.10">
    <property type="entry name" value="Cytochrome P450"/>
    <property type="match status" value="1"/>
</dbReference>
<dbReference type="InterPro" id="IPR001128">
    <property type="entry name" value="Cyt_P450"/>
</dbReference>
<dbReference type="InterPro" id="IPR017972">
    <property type="entry name" value="Cyt_P450_CS"/>
</dbReference>
<dbReference type="InterPro" id="IPR002401">
    <property type="entry name" value="Cyt_P450_E_grp-I"/>
</dbReference>
<dbReference type="InterPro" id="IPR036396">
    <property type="entry name" value="Cyt_P450_sf"/>
</dbReference>
<dbReference type="InterPro" id="IPR050196">
    <property type="entry name" value="Cytochrome_P450_Monoox"/>
</dbReference>
<dbReference type="PANTHER" id="PTHR24291:SF183">
    <property type="entry name" value="CYTOCHROME P450 97B3, CHLOROPLASTIC"/>
    <property type="match status" value="1"/>
</dbReference>
<dbReference type="PANTHER" id="PTHR24291">
    <property type="entry name" value="CYTOCHROME P450 FAMILY 4"/>
    <property type="match status" value="1"/>
</dbReference>
<dbReference type="Pfam" id="PF00067">
    <property type="entry name" value="p450"/>
    <property type="match status" value="1"/>
</dbReference>
<dbReference type="PRINTS" id="PR00463">
    <property type="entry name" value="EP450I"/>
</dbReference>
<dbReference type="PRINTS" id="PR00385">
    <property type="entry name" value="P450"/>
</dbReference>
<dbReference type="SUPFAM" id="SSF48264">
    <property type="entry name" value="Cytochrome P450"/>
    <property type="match status" value="1"/>
</dbReference>
<dbReference type="PROSITE" id="PS00086">
    <property type="entry name" value="CYTOCHROME_P450"/>
    <property type="match status" value="1"/>
</dbReference>